<evidence type="ECO:0000305" key="1"/>
<comment type="function">
    <text>N-acyltransferase required for nodulation. Acts in the production of a small, heat-stable compound (Nod) that stimulates mitosis in various plant protoplasts.</text>
</comment>
<comment type="subcellular location">
    <subcellularLocation>
        <location>Cytoplasm</location>
    </subcellularLocation>
    <subcellularLocation>
        <location>Cell envelope</location>
    </subcellularLocation>
</comment>
<comment type="similarity">
    <text evidence="1">Belongs to the NodA family.</text>
</comment>
<comment type="caution">
    <text evidence="1">Plasmid p42d was originally thought to originate from Rhizobium leguminosarum (biovar phaseoli).</text>
</comment>
<proteinExistence type="inferred from homology"/>
<feature type="chain" id="PRO_0000196337" description="Nodulation protein A">
    <location>
        <begin position="1"/>
        <end position="195"/>
    </location>
</feature>
<feature type="sequence conflict" description="In Ref. 1; M58626/AAA98207." evidence="1" ref="1">
    <original>SDHT</original>
    <variation>RVVR</variation>
    <location>
        <begin position="18"/>
        <end position="21"/>
    </location>
</feature>
<geneLocation type="plasmid">
    <name>sym p42d</name>
</geneLocation>
<dbReference type="EC" id="2.3.1.-"/>
<dbReference type="EMBL" id="M58625">
    <property type="protein sequence ID" value="AAA98207.1"/>
    <property type="molecule type" value="Genomic_DNA"/>
</dbReference>
<dbReference type="EMBL" id="M58626">
    <property type="status" value="NOT_ANNOTATED_CDS"/>
    <property type="molecule type" value="Genomic_DNA"/>
</dbReference>
<dbReference type="EMBL" id="U80928">
    <property type="protein sequence ID" value="AAM54749.1"/>
    <property type="molecule type" value="Genomic_DNA"/>
</dbReference>
<dbReference type="RefSeq" id="WP_004679687.1">
    <property type="nucleotide sequence ID" value="NC_004041.2"/>
</dbReference>
<dbReference type="SMR" id="P24154"/>
<dbReference type="GeneID" id="45960650"/>
<dbReference type="KEGG" id="ret:RHE_PD00310"/>
<dbReference type="HOGENOM" id="CLU_098284_0_0_5"/>
<dbReference type="OrthoDB" id="3573574at2"/>
<dbReference type="Proteomes" id="UP000001936">
    <property type="component" value="Plasmid p42d"/>
</dbReference>
<dbReference type="GO" id="GO:0030313">
    <property type="term" value="C:cell envelope"/>
    <property type="evidence" value="ECO:0007669"/>
    <property type="project" value="UniProtKB-SubCell"/>
</dbReference>
<dbReference type="GO" id="GO:0005829">
    <property type="term" value="C:cytosol"/>
    <property type="evidence" value="ECO:0007669"/>
    <property type="project" value="InterPro"/>
</dbReference>
<dbReference type="GO" id="GO:0016746">
    <property type="term" value="F:acyltransferase activity"/>
    <property type="evidence" value="ECO:0007669"/>
    <property type="project" value="UniProtKB-UniRule"/>
</dbReference>
<dbReference type="Gene3D" id="3.40.630.30">
    <property type="match status" value="1"/>
</dbReference>
<dbReference type="HAMAP" id="MF_00084">
    <property type="entry name" value="NodA"/>
    <property type="match status" value="1"/>
</dbReference>
<dbReference type="InterPro" id="IPR003484">
    <property type="entry name" value="NodA"/>
</dbReference>
<dbReference type="InterPro" id="IPR020567">
    <property type="entry name" value="Nodulation_prot_NodA_CS"/>
</dbReference>
<dbReference type="NCBIfam" id="TIGR04245">
    <property type="entry name" value="nodulat_NodA"/>
    <property type="match status" value="1"/>
</dbReference>
<dbReference type="NCBIfam" id="NF001974">
    <property type="entry name" value="PRK00756.1"/>
    <property type="match status" value="1"/>
</dbReference>
<dbReference type="Pfam" id="PF02474">
    <property type="entry name" value="NodA"/>
    <property type="match status" value="1"/>
</dbReference>
<dbReference type="PROSITE" id="PS01349">
    <property type="entry name" value="NODA"/>
    <property type="match status" value="1"/>
</dbReference>
<name>NODA_RHIEC</name>
<keyword id="KW-0012">Acyltransferase</keyword>
<keyword id="KW-0963">Cytoplasm</keyword>
<keyword id="KW-0536">Nodulation</keyword>
<keyword id="KW-0614">Plasmid</keyword>
<keyword id="KW-1185">Reference proteome</keyword>
<keyword id="KW-0808">Transferase</keyword>
<accession>P24154</accession>
<accession>Q8KLI3</accession>
<protein>
    <recommendedName>
        <fullName>Nodulation protein A</fullName>
        <ecNumber>2.3.1.-</ecNumber>
    </recommendedName>
</protein>
<gene>
    <name type="primary">nodA</name>
    <name type="ordered locus">RHE_PD00310</name>
</gene>
<sequence>MSPQVRWKVCWENELELSDHTELADFFRKTYGPTGAYNALPFEGARSWSGARPELRVIGYDAHGVAAHMGLLRRFVRVGEVDLLVCELGLWGVRPDLEGYGINSMRIVYPVLQQLGVRFAFGGVRQALRNLVLRLCRNGLATVLEGVRVRSTLADVYLNLPPTRCENVILVVFPIGCSMSDWPSGTLIERNGPEL</sequence>
<reference key="1">
    <citation type="journal article" date="1991" name="J. Bacteriol.">
        <title>Novel organization of the common nodulation genes in Rhizobium leguminosarum bv. phaseoli strains.</title>
        <authorList>
            <person name="Vazquez M.V."/>
            <person name="Davalos A."/>
            <person name="Las Penas A."/>
            <person name="Sanchez F."/>
            <person name="Quinto C."/>
        </authorList>
    </citation>
    <scope>NUCLEOTIDE SEQUENCE [GENOMIC DNA]</scope>
    <source>
        <strain>CE3</strain>
    </source>
</reference>
<reference key="2">
    <citation type="journal article" date="2003" name="Genome Biol.">
        <title>The mosaic structure of the symbiotic plasmid of Rhizobium etli CFN42 and its relation to other symbiotic genome compartments.</title>
        <authorList>
            <person name="Gonzalez V."/>
            <person name="Bustos P."/>
            <person name="Ramirez-Romero M.A."/>
            <person name="Medrano-Soto A."/>
            <person name="Salgado H."/>
            <person name="Hernandez-Gonzalez I."/>
            <person name="Hernandez-Celis J.C."/>
            <person name="Quintero V."/>
            <person name="Moreno-Hagelsieb G."/>
            <person name="Girard L."/>
            <person name="Rodriguez O."/>
            <person name="Flores M."/>
            <person name="Cevallos M.A."/>
            <person name="Collado-Vides J."/>
            <person name="Romero D."/>
            <person name="Davila G."/>
        </authorList>
    </citation>
    <scope>NUCLEOTIDE SEQUENCE [LARGE SCALE GENOMIC DNA]</scope>
    <source>
        <strain>ATCC 51251 / DSM 11541 / JCM 21823 / NBRC 15573 / CFN 42</strain>
    </source>
</reference>
<reference key="3">
    <citation type="journal article" date="2006" name="Proc. Natl. Acad. Sci. U.S.A.">
        <title>The partitioned Rhizobium etli genome: genetic and metabolic redundancy in seven interacting replicons.</title>
        <authorList>
            <person name="Gonzalez V."/>
            <person name="Santamaria R.I."/>
            <person name="Bustos P."/>
            <person name="Hernandez-Gonzalez I."/>
            <person name="Medrano-Soto A."/>
            <person name="Moreno-Hagelsieb G."/>
            <person name="Janga S.C."/>
            <person name="Ramirez M.A."/>
            <person name="Jimenez-Jacinto V."/>
            <person name="Collado-Vides J."/>
            <person name="Davila G."/>
        </authorList>
    </citation>
    <scope>NUCLEOTIDE SEQUENCE [LARGE SCALE GENOMIC DNA]</scope>
    <source>
        <strain>ATCC 51251 / DSM 11541 / JCM 21823 / NBRC 15573 / CFN 42</strain>
    </source>
</reference>
<organism>
    <name type="scientific">Rhizobium etli (strain ATCC 51251 / DSM 11541 / JCM 21823 / NBRC 15573 / CFN 42)</name>
    <dbReference type="NCBI Taxonomy" id="347834"/>
    <lineage>
        <taxon>Bacteria</taxon>
        <taxon>Pseudomonadati</taxon>
        <taxon>Pseudomonadota</taxon>
        <taxon>Alphaproteobacteria</taxon>
        <taxon>Hyphomicrobiales</taxon>
        <taxon>Rhizobiaceae</taxon>
        <taxon>Rhizobium/Agrobacterium group</taxon>
        <taxon>Rhizobium</taxon>
    </lineage>
</organism>